<dbReference type="EMBL" id="DQ106414">
    <property type="protein sequence ID" value="ABA47248.1"/>
    <property type="molecule type" value="Genomic_DNA"/>
</dbReference>
<dbReference type="RefSeq" id="YP_001552265.1">
    <property type="nucleotide sequence ID" value="NC_009989.1"/>
</dbReference>
<dbReference type="GeneID" id="10973879"/>
<dbReference type="KEGG" id="vg:10973879"/>
<dbReference type="OrthoDB" id="5555at10239"/>
<dbReference type="Proteomes" id="UP000136605">
    <property type="component" value="Genome"/>
</dbReference>
<organismHost>
    <name type="scientific">Pantherophis guttatus</name>
    <name type="common">Corn snake</name>
    <name type="synonym">Elaphe guttata</name>
    <dbReference type="NCBI Taxonomy" id="94885"/>
</organismHost>
<name>E42_ADES1</name>
<keyword id="KW-1185">Reference proteome</keyword>
<reference key="1">
    <citation type="journal article" date="2002" name="J. Gen. Virol.">
        <title>Genetic analysis of an adenovirus isolated from corn snake (Elaphe guttata) implies common origin with the members of the proposed new genus Atadenovirus.</title>
        <authorList>
            <person name="Farkas S.L."/>
            <person name="Benko M."/>
            <person name="Elo P.T."/>
            <person name="Ursu K."/>
            <person name="Dan A."/>
            <person name="Ahne W."/>
            <person name="Harrach B."/>
        </authorList>
    </citation>
    <scope>NUCLEOTIDE SEQUENCE [GENOMIC DNA]</scope>
</reference>
<accession>A9CB98</accession>
<sequence>MELSRIPEGLVCSSGRPYHAKACFKATLHGFCPPFVLQQALKELLTPVLYDQFYCETPLSQKKAHVHRCRNRCVTFYWHCHCSSANSLQCAAAKKVANSVFYHSFIVMQNDNKMCPVPVCCDTWACIPFKPLGIVKQRRCTCYFFVMGGKFETEVLHVASEYSVKFLPFKPNVEIVCVICSCVDSPESCLKRVRRMMNCLRMVMCCSFVNADALQR</sequence>
<organism>
    <name type="scientific">Snake adenovirus serotype 1</name>
    <name type="common">SnAdV-1</name>
    <dbReference type="NCBI Taxonomy" id="189830"/>
    <lineage>
        <taxon>Viruses</taxon>
        <taxon>Varidnaviria</taxon>
        <taxon>Bamfordvirae</taxon>
        <taxon>Preplasmiviricota</taxon>
        <taxon>Tectiliviricetes</taxon>
        <taxon>Rowavirales</taxon>
        <taxon>Adenoviridae</taxon>
        <taxon>Atadenovirus</taxon>
        <taxon>Snake atadenovirus A</taxon>
    </lineage>
</organism>
<protein>
    <recommendedName>
        <fullName>Protein E4.2</fullName>
    </recommendedName>
</protein>
<feature type="chain" id="PRO_0000425914" description="Protein E4.2">
    <location>
        <begin position="1"/>
        <end position="216"/>
    </location>
</feature>
<proteinExistence type="predicted"/>